<name>QTMAN_XENTR</name>
<feature type="chain" id="PRO_0000311094" description="tRNA-queuosine alpha-mannosyltransferase">
    <location>
        <begin position="1"/>
        <end position="437"/>
    </location>
</feature>
<sequence>MSVLLIEAFYGGSHKQLMDLINQEIEGCVLYTLPAKKWHWRARTAALYFMQAILPDDKYRVLFTSSVLNLAELAVLRPDLGKLKKILYFHENQLIYPVQKTQERDFQYGYNQILSCLVADIVVFNSAFNMESFLTSIKTFLKKIPDHRPKNLEEIIRPKCCVLYFPMTFPDISQFLPEHKRVSHTLADNMSSMDISHCPKTSLQAENMSVEFSHDQIQSSIGESSAEQERATISEKNICASGDPVILNASNTLAGDIRQKKPLHIVWPHRWEHDKDPETFFKVLLKLKEKELTFHVSVLGETFTDVPDIFSEARITLGSSVLHWGYLASKDDYLQALCMADVVVSTAKHEFFGVAMLEAVHCGCYPLCPKSLVYPEIFPAVYLYSSPEQLYRKLENFCKRPDVVRRHRFQGDTARFSWAALRGEFRSLLAAEPREDL</sequence>
<comment type="function">
    <text evidence="1">Glycosyltransferase that specifically catalyzes mannosylation of cytoplasmic tRNA(Asp) modified with queuosine at position 34 (queuosine(34)). Mannosylates the cyclopentene moiety of queuosine(34) in tRNA(Asp) to form mannosyl-queuosine(34). Mannosylation of queuosine(34) in tRNA(Asp) is required to slow-down elongation at cognate codons, GAC and GAU, thereby regulating protein translation.</text>
</comment>
<comment type="catalytic activity">
    <reaction evidence="1">
        <text>queuosine(34) in tRNA(Asp) + GDP-alpha-D-mannose = O-4''-alpha-D-mannosylqueuosine(34) in tRNA(Asp) + GDP + H(+)</text>
        <dbReference type="Rhea" id="RHEA:12885"/>
        <dbReference type="Rhea" id="RHEA-COMP:18572"/>
        <dbReference type="Rhea" id="RHEA-COMP:18581"/>
        <dbReference type="ChEBI" id="CHEBI:15378"/>
        <dbReference type="ChEBI" id="CHEBI:57527"/>
        <dbReference type="ChEBI" id="CHEBI:58189"/>
        <dbReference type="ChEBI" id="CHEBI:194431"/>
        <dbReference type="ChEBI" id="CHEBI:194442"/>
        <dbReference type="EC" id="2.4.1.110"/>
    </reaction>
    <physiologicalReaction direction="left-to-right" evidence="1">
        <dbReference type="Rhea" id="RHEA:12886"/>
    </physiologicalReaction>
</comment>
<comment type="subcellular location">
    <subcellularLocation>
        <location evidence="1">Cytoplasm</location>
    </subcellularLocation>
    <subcellularLocation>
        <location evidence="1">Nucleus</location>
    </subcellularLocation>
</comment>
<comment type="similarity">
    <text evidence="2">Belongs to the glycosyltransferase group 1 family. Glycosyltransferase 4 subfamily.</text>
</comment>
<reference key="1">
    <citation type="submission" date="2004-08" db="EMBL/GenBank/DDBJ databases">
        <authorList>
            <consortium name="NIH - Xenopus Gene Collection (XGC) project"/>
        </authorList>
    </citation>
    <scope>NUCLEOTIDE SEQUENCE [LARGE SCALE MRNA]</scope>
    <source>
        <tissue>Embryo</tissue>
    </source>
</reference>
<gene>
    <name type="primary">gtdc1</name>
    <name evidence="1" type="synonym">qtman</name>
</gene>
<protein>
    <recommendedName>
        <fullName evidence="2">tRNA-queuosine alpha-mannosyltransferase</fullName>
        <shortName evidence="2">QTMAN</shortName>
        <ecNumber evidence="1">2.4.1.110</ecNumber>
    </recommendedName>
    <alternativeName>
        <fullName evidence="2">Glycosyltransferase-like domain-containing protein 1</fullName>
    </alternativeName>
</protein>
<dbReference type="EC" id="2.4.1.110" evidence="1"/>
<dbReference type="EMBL" id="BC080493">
    <property type="protein sequence ID" value="AAH80493.1"/>
    <property type="molecule type" value="mRNA"/>
</dbReference>
<dbReference type="RefSeq" id="NP_001007984.1">
    <property type="nucleotide sequence ID" value="NM_001007983.2"/>
</dbReference>
<dbReference type="RefSeq" id="XP_012825782.2">
    <property type="nucleotide sequence ID" value="XM_012970328.3"/>
</dbReference>
<dbReference type="RefSeq" id="XP_017952579.2">
    <property type="nucleotide sequence ID" value="XM_018097090.2"/>
</dbReference>
<dbReference type="FunCoup" id="Q66K99">
    <property type="interactions" value="1148"/>
</dbReference>
<dbReference type="STRING" id="8364.ENSXETP00000045161"/>
<dbReference type="CAZy" id="GT4">
    <property type="family name" value="Glycosyltransferase Family 4"/>
</dbReference>
<dbReference type="PaxDb" id="8364-ENSXETP00000000516"/>
<dbReference type="GeneID" id="493348"/>
<dbReference type="KEGG" id="xtr:493348"/>
<dbReference type="AGR" id="Xenbase:XB-GENE-1004420"/>
<dbReference type="CTD" id="79712"/>
<dbReference type="Xenbase" id="XB-GENE-1004420">
    <property type="gene designation" value="gtdc1"/>
</dbReference>
<dbReference type="eggNOG" id="ENOG502QQJ3">
    <property type="taxonomic scope" value="Eukaryota"/>
</dbReference>
<dbReference type="InParanoid" id="Q66K99"/>
<dbReference type="OMA" id="HRWEYDK"/>
<dbReference type="OrthoDB" id="10032790at2759"/>
<dbReference type="Proteomes" id="UP000008143">
    <property type="component" value="Chromosome 9"/>
</dbReference>
<dbReference type="Bgee" id="ENSXETG00000000254">
    <property type="expression patterns" value="Expressed in 4-cell stage embryo and 12 other cell types or tissues"/>
</dbReference>
<dbReference type="GO" id="GO:0005737">
    <property type="term" value="C:cytoplasm"/>
    <property type="evidence" value="ECO:0000250"/>
    <property type="project" value="UniProtKB"/>
</dbReference>
<dbReference type="GO" id="GO:0005634">
    <property type="term" value="C:nucleus"/>
    <property type="evidence" value="ECO:0000250"/>
    <property type="project" value="UniProtKB"/>
</dbReference>
<dbReference type="GO" id="GO:0016438">
    <property type="term" value="F:tRNA-queuosine(34) beta-mannosyltransferase activity"/>
    <property type="evidence" value="ECO:0000250"/>
    <property type="project" value="UniProtKB"/>
</dbReference>
<dbReference type="GO" id="GO:0007417">
    <property type="term" value="P:central nervous system development"/>
    <property type="evidence" value="ECO:0007669"/>
    <property type="project" value="Ensembl"/>
</dbReference>
<dbReference type="GO" id="GO:0006417">
    <property type="term" value="P:regulation of translation"/>
    <property type="evidence" value="ECO:0000250"/>
    <property type="project" value="UniProtKB"/>
</dbReference>
<dbReference type="GO" id="GO:0006400">
    <property type="term" value="P:tRNA modification"/>
    <property type="evidence" value="ECO:0000250"/>
    <property type="project" value="UniProtKB"/>
</dbReference>
<dbReference type="CDD" id="cd01635">
    <property type="entry name" value="Glycosyltransferase_GTB-type"/>
    <property type="match status" value="1"/>
</dbReference>
<dbReference type="Gene3D" id="3.40.50.2000">
    <property type="entry name" value="Glycogen Phosphorylase B"/>
    <property type="match status" value="1"/>
</dbReference>
<dbReference type="InterPro" id="IPR001296">
    <property type="entry name" value="Glyco_trans_1"/>
</dbReference>
<dbReference type="InterPro" id="IPR051862">
    <property type="entry name" value="GT-like_domain_containing_1"/>
</dbReference>
<dbReference type="InterPro" id="IPR022701">
    <property type="entry name" value="QTMAN_N"/>
</dbReference>
<dbReference type="PANTHER" id="PTHR13615">
    <property type="entry name" value="GLYCOSYLTRANSFERASE-LIKE 1"/>
    <property type="match status" value="1"/>
</dbReference>
<dbReference type="PANTHER" id="PTHR13615:SF3">
    <property type="entry name" value="GLYCOSYLTRANSFERASE-LIKE DOMAIN-CONTAINING PROTEIN 1"/>
    <property type="match status" value="1"/>
</dbReference>
<dbReference type="Pfam" id="PF00534">
    <property type="entry name" value="Glycos_transf_1"/>
    <property type="match status" value="1"/>
</dbReference>
<dbReference type="Pfam" id="PF12038">
    <property type="entry name" value="QTMAN_N"/>
    <property type="match status" value="1"/>
</dbReference>
<dbReference type="SUPFAM" id="SSF53756">
    <property type="entry name" value="UDP-Glycosyltransferase/glycogen phosphorylase"/>
    <property type="match status" value="1"/>
</dbReference>
<keyword id="KW-0963">Cytoplasm</keyword>
<keyword id="KW-0328">Glycosyltransferase</keyword>
<keyword id="KW-0539">Nucleus</keyword>
<keyword id="KW-1185">Reference proteome</keyword>
<keyword id="KW-0808">Transferase</keyword>
<proteinExistence type="evidence at transcript level"/>
<organism>
    <name type="scientific">Xenopus tropicalis</name>
    <name type="common">Western clawed frog</name>
    <name type="synonym">Silurana tropicalis</name>
    <dbReference type="NCBI Taxonomy" id="8364"/>
    <lineage>
        <taxon>Eukaryota</taxon>
        <taxon>Metazoa</taxon>
        <taxon>Chordata</taxon>
        <taxon>Craniata</taxon>
        <taxon>Vertebrata</taxon>
        <taxon>Euteleostomi</taxon>
        <taxon>Amphibia</taxon>
        <taxon>Batrachia</taxon>
        <taxon>Anura</taxon>
        <taxon>Pipoidea</taxon>
        <taxon>Pipidae</taxon>
        <taxon>Xenopodinae</taxon>
        <taxon>Xenopus</taxon>
        <taxon>Silurana</taxon>
    </lineage>
</organism>
<accession>Q66K99</accession>
<evidence type="ECO:0000250" key="1">
    <source>
        <dbReference type="UniProtKB" id="Q4AE62"/>
    </source>
</evidence>
<evidence type="ECO:0000305" key="2"/>